<accession>B0KND7</accession>
<feature type="chain" id="PRO_1000075054" description="4-diphosphocytidyl-2-C-methyl-D-erythritol kinase">
    <location>
        <begin position="1"/>
        <end position="286"/>
    </location>
</feature>
<feature type="active site" evidence="1">
    <location>
        <position position="11"/>
    </location>
</feature>
<feature type="active site" evidence="1">
    <location>
        <position position="136"/>
    </location>
</feature>
<feature type="binding site" evidence="1">
    <location>
        <begin position="94"/>
        <end position="104"/>
    </location>
    <ligand>
        <name>ATP</name>
        <dbReference type="ChEBI" id="CHEBI:30616"/>
    </ligand>
</feature>
<sequence length="286" mass="30935">MHTLTLPAPAKLNLWLHIIGRRADGYHELETVFQFLDHGDELSFALREDGVIRLHTEIEAVPHDSNLIVRAARKLQEQSGTALGADIWLTKVLPMGGGIGGGSSDAATTLLALAHLWQLDWDEDRLAALGLSLGADVPVFVRGHAAFAQGVGEQLTPVDPIEPWYVVLVPQVSVSTVEIFSHPQLTRDSLPLKMRPVPEGNSRNDCQPVVEQNYPEVRNALNSLGKFTEARLTGTGSCVFGAFPSKAEADKVLALLSATQTGFVAKGSNISMLHRKLQSLVKKSSA</sequence>
<protein>
    <recommendedName>
        <fullName evidence="1">4-diphosphocytidyl-2-C-methyl-D-erythritol kinase</fullName>
        <shortName evidence="1">CMK</shortName>
        <ecNumber evidence="1">2.7.1.148</ecNumber>
    </recommendedName>
    <alternativeName>
        <fullName evidence="1">4-(cytidine-5'-diphospho)-2-C-methyl-D-erythritol kinase</fullName>
    </alternativeName>
</protein>
<comment type="function">
    <text evidence="1">Catalyzes the phosphorylation of the position 2 hydroxy group of 4-diphosphocytidyl-2C-methyl-D-erythritol.</text>
</comment>
<comment type="catalytic activity">
    <reaction evidence="1">
        <text>4-CDP-2-C-methyl-D-erythritol + ATP = 4-CDP-2-C-methyl-D-erythritol 2-phosphate + ADP + H(+)</text>
        <dbReference type="Rhea" id="RHEA:18437"/>
        <dbReference type="ChEBI" id="CHEBI:15378"/>
        <dbReference type="ChEBI" id="CHEBI:30616"/>
        <dbReference type="ChEBI" id="CHEBI:57823"/>
        <dbReference type="ChEBI" id="CHEBI:57919"/>
        <dbReference type="ChEBI" id="CHEBI:456216"/>
        <dbReference type="EC" id="2.7.1.148"/>
    </reaction>
</comment>
<comment type="pathway">
    <text evidence="1">Isoprenoid biosynthesis; isopentenyl diphosphate biosynthesis via DXP pathway; isopentenyl diphosphate from 1-deoxy-D-xylulose 5-phosphate: step 3/6.</text>
</comment>
<comment type="similarity">
    <text evidence="1">Belongs to the GHMP kinase family. IspE subfamily.</text>
</comment>
<reference key="1">
    <citation type="submission" date="2008-01" db="EMBL/GenBank/DDBJ databases">
        <title>Complete sequence of Pseudomonas putida GB-1.</title>
        <authorList>
            <consortium name="US DOE Joint Genome Institute"/>
            <person name="Copeland A."/>
            <person name="Lucas S."/>
            <person name="Lapidus A."/>
            <person name="Barry K."/>
            <person name="Glavina del Rio T."/>
            <person name="Dalin E."/>
            <person name="Tice H."/>
            <person name="Pitluck S."/>
            <person name="Bruce D."/>
            <person name="Goodwin L."/>
            <person name="Chertkov O."/>
            <person name="Brettin T."/>
            <person name="Detter J.C."/>
            <person name="Han C."/>
            <person name="Kuske C.R."/>
            <person name="Schmutz J."/>
            <person name="Larimer F."/>
            <person name="Land M."/>
            <person name="Hauser L."/>
            <person name="Kyrpides N."/>
            <person name="Kim E."/>
            <person name="McCarthy J.K."/>
            <person name="Richardson P."/>
        </authorList>
    </citation>
    <scope>NUCLEOTIDE SEQUENCE [LARGE SCALE GENOMIC DNA]</scope>
    <source>
        <strain>GB-1</strain>
    </source>
</reference>
<name>ISPE_PSEPG</name>
<proteinExistence type="inferred from homology"/>
<evidence type="ECO:0000255" key="1">
    <source>
        <dbReference type="HAMAP-Rule" id="MF_00061"/>
    </source>
</evidence>
<dbReference type="EC" id="2.7.1.148" evidence="1"/>
<dbReference type="EMBL" id="CP000926">
    <property type="protein sequence ID" value="ABY96677.1"/>
    <property type="molecule type" value="Genomic_DNA"/>
</dbReference>
<dbReference type="RefSeq" id="WP_012270478.1">
    <property type="nucleotide sequence ID" value="NC_010322.1"/>
</dbReference>
<dbReference type="SMR" id="B0KND7"/>
<dbReference type="KEGG" id="ppg:PputGB1_0767"/>
<dbReference type="eggNOG" id="COG1947">
    <property type="taxonomic scope" value="Bacteria"/>
</dbReference>
<dbReference type="HOGENOM" id="CLU_053057_3_0_6"/>
<dbReference type="UniPathway" id="UPA00056">
    <property type="reaction ID" value="UER00094"/>
</dbReference>
<dbReference type="Proteomes" id="UP000002157">
    <property type="component" value="Chromosome"/>
</dbReference>
<dbReference type="GO" id="GO:0050515">
    <property type="term" value="F:4-(cytidine 5'-diphospho)-2-C-methyl-D-erythritol kinase activity"/>
    <property type="evidence" value="ECO:0007669"/>
    <property type="project" value="UniProtKB-UniRule"/>
</dbReference>
<dbReference type="GO" id="GO:0005524">
    <property type="term" value="F:ATP binding"/>
    <property type="evidence" value="ECO:0007669"/>
    <property type="project" value="UniProtKB-UniRule"/>
</dbReference>
<dbReference type="GO" id="GO:0019288">
    <property type="term" value="P:isopentenyl diphosphate biosynthetic process, methylerythritol 4-phosphate pathway"/>
    <property type="evidence" value="ECO:0007669"/>
    <property type="project" value="UniProtKB-UniRule"/>
</dbReference>
<dbReference type="GO" id="GO:0016114">
    <property type="term" value="P:terpenoid biosynthetic process"/>
    <property type="evidence" value="ECO:0007669"/>
    <property type="project" value="InterPro"/>
</dbReference>
<dbReference type="FunFam" id="3.30.230.10:FF:000022">
    <property type="entry name" value="4-diphosphocytidyl-2-C-methyl-D-erythritol kinase"/>
    <property type="match status" value="1"/>
</dbReference>
<dbReference type="Gene3D" id="3.30.230.10">
    <property type="match status" value="1"/>
</dbReference>
<dbReference type="Gene3D" id="3.30.70.890">
    <property type="entry name" value="GHMP kinase, C-terminal domain"/>
    <property type="match status" value="1"/>
</dbReference>
<dbReference type="HAMAP" id="MF_00061">
    <property type="entry name" value="IspE"/>
    <property type="match status" value="1"/>
</dbReference>
<dbReference type="InterPro" id="IPR013750">
    <property type="entry name" value="GHMP_kinase_C_dom"/>
</dbReference>
<dbReference type="InterPro" id="IPR036554">
    <property type="entry name" value="GHMP_kinase_C_sf"/>
</dbReference>
<dbReference type="InterPro" id="IPR006204">
    <property type="entry name" value="GHMP_kinase_N_dom"/>
</dbReference>
<dbReference type="InterPro" id="IPR004424">
    <property type="entry name" value="IspE"/>
</dbReference>
<dbReference type="InterPro" id="IPR020568">
    <property type="entry name" value="Ribosomal_Su5_D2-typ_SF"/>
</dbReference>
<dbReference type="InterPro" id="IPR014721">
    <property type="entry name" value="Ribsml_uS5_D2-typ_fold_subgr"/>
</dbReference>
<dbReference type="NCBIfam" id="TIGR00154">
    <property type="entry name" value="ispE"/>
    <property type="match status" value="1"/>
</dbReference>
<dbReference type="PANTHER" id="PTHR43527">
    <property type="entry name" value="4-DIPHOSPHOCYTIDYL-2-C-METHYL-D-ERYTHRITOL KINASE, CHLOROPLASTIC"/>
    <property type="match status" value="1"/>
</dbReference>
<dbReference type="PANTHER" id="PTHR43527:SF2">
    <property type="entry name" value="4-DIPHOSPHOCYTIDYL-2-C-METHYL-D-ERYTHRITOL KINASE, CHLOROPLASTIC"/>
    <property type="match status" value="1"/>
</dbReference>
<dbReference type="Pfam" id="PF08544">
    <property type="entry name" value="GHMP_kinases_C"/>
    <property type="match status" value="1"/>
</dbReference>
<dbReference type="Pfam" id="PF00288">
    <property type="entry name" value="GHMP_kinases_N"/>
    <property type="match status" value="1"/>
</dbReference>
<dbReference type="PIRSF" id="PIRSF010376">
    <property type="entry name" value="IspE"/>
    <property type="match status" value="1"/>
</dbReference>
<dbReference type="SUPFAM" id="SSF55060">
    <property type="entry name" value="GHMP Kinase, C-terminal domain"/>
    <property type="match status" value="1"/>
</dbReference>
<dbReference type="SUPFAM" id="SSF54211">
    <property type="entry name" value="Ribosomal protein S5 domain 2-like"/>
    <property type="match status" value="1"/>
</dbReference>
<gene>
    <name evidence="1" type="primary">ispE</name>
    <name type="ordered locus">PputGB1_0767</name>
</gene>
<organism>
    <name type="scientific">Pseudomonas putida (strain GB-1)</name>
    <dbReference type="NCBI Taxonomy" id="76869"/>
    <lineage>
        <taxon>Bacteria</taxon>
        <taxon>Pseudomonadati</taxon>
        <taxon>Pseudomonadota</taxon>
        <taxon>Gammaproteobacteria</taxon>
        <taxon>Pseudomonadales</taxon>
        <taxon>Pseudomonadaceae</taxon>
        <taxon>Pseudomonas</taxon>
    </lineage>
</organism>
<keyword id="KW-0067">ATP-binding</keyword>
<keyword id="KW-0414">Isoprene biosynthesis</keyword>
<keyword id="KW-0418">Kinase</keyword>
<keyword id="KW-0547">Nucleotide-binding</keyword>
<keyword id="KW-0808">Transferase</keyword>